<evidence type="ECO:0000250" key="1"/>
<evidence type="ECO:0000256" key="2">
    <source>
        <dbReference type="SAM" id="MobiDB-lite"/>
    </source>
</evidence>
<evidence type="ECO:0000305" key="3"/>
<accession>P0A3K7</accession>
<accession>Q9ZF20</accession>
<gene>
    <name type="primary">infB</name>
</gene>
<comment type="function">
    <text evidence="1">One of the essential components for the initiation of protein synthesis. Protects formylmethionyl-tRNA from spontaneous hydrolysis and promotes its binding to the 30S ribosomal subunits. Also involved in the hydrolysis of GTP during the formation of the 70S ribosomal complex (By similarity).</text>
</comment>
<comment type="subcellular location">
    <subcellularLocation>
        <location evidence="1">Cytoplasm</location>
    </subcellularLocation>
</comment>
<comment type="similarity">
    <text evidence="3">Belongs to the TRAFAC class translation factor GTPase superfamily. Classic translation factor GTPase family. IF-2 subfamily.</text>
</comment>
<protein>
    <recommendedName>
        <fullName>Translation initiation factor IF-2</fullName>
    </recommendedName>
</protein>
<sequence length="927" mass="102401">MSKKRLHEIAKEIGKTSKEVVEQAQSLGLPVKSHASSVEENDATRIVESFSSSKTKAPTNSVQTNQGVKTESKTVETKQGLSDDKPSTQPVAKPKPQSRNFKAEREARAKAEAEKRQHNGDHRKNNRHNDTRSDDRRHQGQKRSNGNRNDNRQGQQNNRNKNDGRYADHKQKPQTRPQQPAGNRIDFKARAAALKAEQNAEYSRHSEQRFREEQEAKRQAAKEQELAKAAALKAQEEAQKAKEKLASKPVAKVKEIVNKVAATPSQTADSRRKKQTRSDKSRQFSNENEDGQKQTKNKKNWNNQNQVRNQRNSNWNHNKKNKKGKTNGAPKPVTERKFHELPKEFEYTEGMTVAEIAKRIKREPAEIVKKLFMMGVMATQNQSLDGDTIELLMVDYGIEAHAKVEVDEADIERFFADEDYLNPDNLTERPPVVTIMGHVDHGKTTLLDTLRNSRVATGEAGGITQHIGAYQIEEAGKKITFLDTPGHAAFTSMRARGASVTDITILIVAADDGVMPQTVEAINHSKAAGVPIIVAINKIDKPGANPERVISELAEHGVISTAWGGESEFVEISAKFGKNIQELLETVLLVAEMEELKADADVRAIGTVIEARLDKGKGAVATLLVQQGTLNVQDPIVVGNTFGRVRAMTNDLGRRVKVAGPSTPVSITGLNEAPMAGDHFAVYADEKAARAAGEERAKRALLKQRQNTQRVSLENLFDTLKAGEVKSVNVIIKADVQGSVEALAASLLKIDVEGVKVNVVHSAVGAINESDVTLAEASNAVIIGFNVRPTPQARQQADADDVEIRQHSIIYKVIEEVEEAMKGKLDPEYQEKILGEAIIRETFKVSKVGTIGGFMVINGKVTRDSSVRVIRDGVVIFDGKLASLKHYKDDVKEVGNAQEGGLMIENYNDLKEDDTIEAYIMEEIKRK</sequence>
<proteinExistence type="inferred from homology"/>
<name>IF2_STRAG</name>
<dbReference type="EMBL" id="AJ251496">
    <property type="protein sequence ID" value="CAC00491.1"/>
    <property type="molecule type" value="Genomic_DNA"/>
</dbReference>
<dbReference type="EMBL" id="AJ003164">
    <property type="protein sequence ID" value="CAA05919.1"/>
    <property type="molecule type" value="Genomic_DNA"/>
</dbReference>
<dbReference type="RefSeq" id="WP_000039152.1">
    <property type="nucleotide sequence ID" value="NZ_UHEZ01000001.1"/>
</dbReference>
<dbReference type="SMR" id="P0A3K7"/>
<dbReference type="OMA" id="RKNPWMN"/>
<dbReference type="GO" id="GO:0005829">
    <property type="term" value="C:cytosol"/>
    <property type="evidence" value="ECO:0007669"/>
    <property type="project" value="TreeGrafter"/>
</dbReference>
<dbReference type="GO" id="GO:0005525">
    <property type="term" value="F:GTP binding"/>
    <property type="evidence" value="ECO:0007669"/>
    <property type="project" value="UniProtKB-KW"/>
</dbReference>
<dbReference type="GO" id="GO:0003924">
    <property type="term" value="F:GTPase activity"/>
    <property type="evidence" value="ECO:0007669"/>
    <property type="project" value="UniProtKB-UniRule"/>
</dbReference>
<dbReference type="GO" id="GO:0003743">
    <property type="term" value="F:translation initiation factor activity"/>
    <property type="evidence" value="ECO:0007669"/>
    <property type="project" value="UniProtKB-UniRule"/>
</dbReference>
<dbReference type="CDD" id="cd01887">
    <property type="entry name" value="IF2_eIF5B"/>
    <property type="match status" value="1"/>
</dbReference>
<dbReference type="CDD" id="cd03702">
    <property type="entry name" value="IF2_mtIF2_II"/>
    <property type="match status" value="1"/>
</dbReference>
<dbReference type="CDD" id="cd03692">
    <property type="entry name" value="mtIF2_IVc"/>
    <property type="match status" value="1"/>
</dbReference>
<dbReference type="FunFam" id="2.40.30.10:FF:000007">
    <property type="entry name" value="Translation initiation factor IF-2"/>
    <property type="match status" value="1"/>
</dbReference>
<dbReference type="FunFam" id="2.40.30.10:FF:000008">
    <property type="entry name" value="Translation initiation factor IF-2"/>
    <property type="match status" value="1"/>
</dbReference>
<dbReference type="FunFam" id="3.40.50.10050:FF:000001">
    <property type="entry name" value="Translation initiation factor IF-2"/>
    <property type="match status" value="1"/>
</dbReference>
<dbReference type="FunFam" id="3.40.50.300:FF:000019">
    <property type="entry name" value="Translation initiation factor IF-2"/>
    <property type="match status" value="1"/>
</dbReference>
<dbReference type="Gene3D" id="1.10.10.2480">
    <property type="match status" value="1"/>
</dbReference>
<dbReference type="Gene3D" id="3.40.50.300">
    <property type="entry name" value="P-loop containing nucleotide triphosphate hydrolases"/>
    <property type="match status" value="1"/>
</dbReference>
<dbReference type="Gene3D" id="2.40.30.10">
    <property type="entry name" value="Translation factors"/>
    <property type="match status" value="2"/>
</dbReference>
<dbReference type="Gene3D" id="3.40.50.10050">
    <property type="entry name" value="Translation initiation factor IF- 2, domain 3"/>
    <property type="match status" value="1"/>
</dbReference>
<dbReference type="HAMAP" id="MF_00100_B">
    <property type="entry name" value="IF_2_B"/>
    <property type="match status" value="1"/>
</dbReference>
<dbReference type="InterPro" id="IPR053905">
    <property type="entry name" value="EF-G-like_DII"/>
</dbReference>
<dbReference type="InterPro" id="IPR044145">
    <property type="entry name" value="IF2_II"/>
</dbReference>
<dbReference type="InterPro" id="IPR006847">
    <property type="entry name" value="IF2_N"/>
</dbReference>
<dbReference type="InterPro" id="IPR027417">
    <property type="entry name" value="P-loop_NTPase"/>
</dbReference>
<dbReference type="InterPro" id="IPR005225">
    <property type="entry name" value="Small_GTP-bd"/>
</dbReference>
<dbReference type="InterPro" id="IPR000795">
    <property type="entry name" value="T_Tr_GTP-bd_dom"/>
</dbReference>
<dbReference type="InterPro" id="IPR000178">
    <property type="entry name" value="TF_IF2_bacterial-like"/>
</dbReference>
<dbReference type="InterPro" id="IPR015760">
    <property type="entry name" value="TIF_IF2"/>
</dbReference>
<dbReference type="InterPro" id="IPR023115">
    <property type="entry name" value="TIF_IF2_dom3"/>
</dbReference>
<dbReference type="InterPro" id="IPR036925">
    <property type="entry name" value="TIF_IF2_dom3_sf"/>
</dbReference>
<dbReference type="InterPro" id="IPR009000">
    <property type="entry name" value="Transl_B-barrel_sf"/>
</dbReference>
<dbReference type="NCBIfam" id="TIGR00487">
    <property type="entry name" value="IF-2"/>
    <property type="match status" value="1"/>
</dbReference>
<dbReference type="NCBIfam" id="TIGR00231">
    <property type="entry name" value="small_GTP"/>
    <property type="match status" value="1"/>
</dbReference>
<dbReference type="PANTHER" id="PTHR43381:SF5">
    <property type="entry name" value="TR-TYPE G DOMAIN-CONTAINING PROTEIN"/>
    <property type="match status" value="1"/>
</dbReference>
<dbReference type="PANTHER" id="PTHR43381">
    <property type="entry name" value="TRANSLATION INITIATION FACTOR IF-2-RELATED"/>
    <property type="match status" value="1"/>
</dbReference>
<dbReference type="Pfam" id="PF22042">
    <property type="entry name" value="EF-G_D2"/>
    <property type="match status" value="1"/>
</dbReference>
<dbReference type="Pfam" id="PF00009">
    <property type="entry name" value="GTP_EFTU"/>
    <property type="match status" value="1"/>
</dbReference>
<dbReference type="Pfam" id="PF11987">
    <property type="entry name" value="IF-2"/>
    <property type="match status" value="1"/>
</dbReference>
<dbReference type="Pfam" id="PF04760">
    <property type="entry name" value="IF2_N"/>
    <property type="match status" value="2"/>
</dbReference>
<dbReference type="SUPFAM" id="SSF52156">
    <property type="entry name" value="Initiation factor IF2/eIF5b, domain 3"/>
    <property type="match status" value="1"/>
</dbReference>
<dbReference type="SUPFAM" id="SSF52540">
    <property type="entry name" value="P-loop containing nucleoside triphosphate hydrolases"/>
    <property type="match status" value="1"/>
</dbReference>
<dbReference type="SUPFAM" id="SSF50447">
    <property type="entry name" value="Translation proteins"/>
    <property type="match status" value="2"/>
</dbReference>
<dbReference type="PROSITE" id="PS51722">
    <property type="entry name" value="G_TR_2"/>
    <property type="match status" value="1"/>
</dbReference>
<dbReference type="PROSITE" id="PS01176">
    <property type="entry name" value="IF2"/>
    <property type="match status" value="1"/>
</dbReference>
<keyword id="KW-0963">Cytoplasm</keyword>
<keyword id="KW-0342">GTP-binding</keyword>
<keyword id="KW-0396">Initiation factor</keyword>
<keyword id="KW-0547">Nucleotide-binding</keyword>
<keyword id="KW-0648">Protein biosynthesis</keyword>
<reference key="1">
    <citation type="submission" date="1997-11" db="EMBL/GenBank/DDBJ databases">
        <title>Sequence of the infB gene from Streptococcus agalactiae.</title>
        <authorList>
            <person name="Fage-Larsen J."/>
            <person name="Steffensen S.A.D.A."/>
            <person name="Hauge M."/>
            <person name="Poulsen K."/>
            <person name="Mortensen K.K."/>
            <person name="Sperling-Petersen H.U."/>
        </authorList>
    </citation>
    <scope>NUCLEOTIDE SEQUENCE [GENOMIC DNA]</scope>
    <source>
        <strain>3076 / Serotype Ib</strain>
    </source>
</reference>
<reference key="2">
    <citation type="journal article" date="2000" name="Microbiology">
        <title>Investigation of the translation-initiation factor IF2 gene, infB, as a tool to study the population structure of Streptococcus agalactiae.</title>
        <authorList>
            <person name="Hedegaard J."/>
            <person name="Hauge M."/>
            <person name="Fage-Larsen J."/>
            <person name="Mortensen K.K."/>
            <person name="Kilian M."/>
            <person name="Sperling-Petersen H.U."/>
            <person name="Poulsen K."/>
        </authorList>
    </citation>
    <scope>NUCLEOTIDE SEQUENCE [GENOMIC DNA]</scope>
    <source>
        <strain>949 / Serotype II</strain>
    </source>
</reference>
<feature type="chain" id="PRO_0000137257" description="Translation initiation factor IF-2">
    <location>
        <begin position="1"/>
        <end position="927"/>
    </location>
</feature>
<feature type="domain" description="tr-type G">
    <location>
        <begin position="428"/>
        <end position="597"/>
    </location>
</feature>
<feature type="region of interest" description="Disordered" evidence="2">
    <location>
        <begin position="27"/>
        <end position="338"/>
    </location>
</feature>
<feature type="region of interest" description="G1" evidence="1">
    <location>
        <begin position="437"/>
        <end position="444"/>
    </location>
</feature>
<feature type="region of interest" description="G2" evidence="1">
    <location>
        <begin position="462"/>
        <end position="466"/>
    </location>
</feature>
<feature type="region of interest" description="G3" evidence="1">
    <location>
        <begin position="483"/>
        <end position="486"/>
    </location>
</feature>
<feature type="region of interest" description="G4" evidence="1">
    <location>
        <begin position="537"/>
        <end position="540"/>
    </location>
</feature>
<feature type="region of interest" description="G5" evidence="1">
    <location>
        <begin position="573"/>
        <end position="575"/>
    </location>
</feature>
<feature type="compositionally biased region" description="Polar residues" evidence="2">
    <location>
        <begin position="49"/>
        <end position="69"/>
    </location>
</feature>
<feature type="compositionally biased region" description="Basic and acidic residues" evidence="2">
    <location>
        <begin position="70"/>
        <end position="86"/>
    </location>
</feature>
<feature type="compositionally biased region" description="Basic and acidic residues" evidence="2">
    <location>
        <begin position="101"/>
        <end position="138"/>
    </location>
</feature>
<feature type="compositionally biased region" description="Low complexity" evidence="2">
    <location>
        <begin position="146"/>
        <end position="159"/>
    </location>
</feature>
<feature type="compositionally biased region" description="Basic and acidic residues" evidence="2">
    <location>
        <begin position="160"/>
        <end position="171"/>
    </location>
</feature>
<feature type="compositionally biased region" description="Basic and acidic residues" evidence="2">
    <location>
        <begin position="202"/>
        <end position="226"/>
    </location>
</feature>
<feature type="compositionally biased region" description="Basic and acidic residues" evidence="2">
    <location>
        <begin position="234"/>
        <end position="257"/>
    </location>
</feature>
<feature type="compositionally biased region" description="Low complexity" evidence="2">
    <location>
        <begin position="300"/>
        <end position="316"/>
    </location>
</feature>
<feature type="binding site" evidence="1">
    <location>
        <begin position="437"/>
        <end position="444"/>
    </location>
    <ligand>
        <name>GTP</name>
        <dbReference type="ChEBI" id="CHEBI:37565"/>
    </ligand>
</feature>
<feature type="binding site" evidence="1">
    <location>
        <begin position="483"/>
        <end position="487"/>
    </location>
    <ligand>
        <name>GTP</name>
        <dbReference type="ChEBI" id="CHEBI:37565"/>
    </ligand>
</feature>
<feature type="binding site" evidence="1">
    <location>
        <begin position="537"/>
        <end position="540"/>
    </location>
    <ligand>
        <name>GTP</name>
        <dbReference type="ChEBI" id="CHEBI:37565"/>
    </ligand>
</feature>
<organism>
    <name type="scientific">Streptococcus agalactiae</name>
    <dbReference type="NCBI Taxonomy" id="1311"/>
    <lineage>
        <taxon>Bacteria</taxon>
        <taxon>Bacillati</taxon>
        <taxon>Bacillota</taxon>
        <taxon>Bacilli</taxon>
        <taxon>Lactobacillales</taxon>
        <taxon>Streptococcaceae</taxon>
        <taxon>Streptococcus</taxon>
    </lineage>
</organism>